<gene>
    <name evidence="4" type="primary">UGT75L17</name>
</gene>
<reference key="1">
    <citation type="journal article" date="2007" name="Trees">
        <title>Flavonoid genes of pear (Pyrus communis).</title>
        <authorList>
            <person name="Fischer T.C."/>
            <person name="Gosch C."/>
            <person name="Pfeiffer J."/>
            <person name="Halbwirth H."/>
            <person name="Halle C."/>
            <person name="Stich K."/>
            <person name="Forkmann G."/>
        </authorList>
        <dbReference type="AGRICOLA" id="IND43942472"/>
    </citation>
    <scope>NUCLEOTIDE SEQUENCE [MRNA]</scope>
</reference>
<reference key="2">
    <citation type="journal article" date="2016" name="Phytochemistry">
        <title>Identification and characterization of UDP-glucose:Phloretin 4'-O-glycosyltransferase from Malus x domestica Borkh.</title>
        <authorList>
            <person name="Yahyaa M."/>
            <person name="Davidovich-Rikanati R."/>
            <person name="Eyal Y."/>
            <person name="Sheachter A."/>
            <person name="Marzouk S."/>
            <person name="Lewinsohn E."/>
            <person name="Ibdah M."/>
        </authorList>
    </citation>
    <scope>FUNCTION</scope>
    <scope>CATALYTIC ACTIVITY</scope>
    <scope>BIOPHYSICOCHEMICAL PROPERTIES</scope>
    <scope>TISSUE SPECIFICITY</scope>
</reference>
<sequence>MVQHRFLLVTFPAQGHINPSLQFAKRLINTTGAHVTYVTSLSAHRRIGNGSIPDGLTYAPFSDGYDDGFKPGDNVDDYMSELRRRGVQAITDLVVASANEGHPYTCLVYSLLLPWSAGMAHELHLPSVLLWIQPATVFDIYYYYFNGYKDLIRDNTSSGTNNVLPCSIELPGLPLSFTSRDLPSFMVDTNPYNFALPLFQEQMELLERETNPTILVNTFDALEPEALKAIDKYNLIGVGPLIPSAFLDGKDPSDKSFGGDLFQKSKDSSYLEWLNSKPEGSVIYVSFGSISVLGKAQMEEIAKGLLDCGLPFLWVIRDKVGKKGDDNEAKKEEEMLRCREELEELGMIVPWCSQVEVLSSPSLGCFVTHCGWNSSLESLVSGVPVVAFPQWTDQGTNAKLIEDYWKTGVRVTPNEEGIVTGEELKRCLDLVLGSGEIGEDVRRNAKKWKDLAREAVSEGDSSDKNLRAFLDQIKVLKDARH</sequence>
<accession>A7MAS5</accession>
<proteinExistence type="evidence at protein level"/>
<organism>
    <name type="scientific">Malus domestica</name>
    <name type="common">Apple</name>
    <name type="synonym">Pyrus malus</name>
    <dbReference type="NCBI Taxonomy" id="3750"/>
    <lineage>
        <taxon>Eukaryota</taxon>
        <taxon>Viridiplantae</taxon>
        <taxon>Streptophyta</taxon>
        <taxon>Embryophyta</taxon>
        <taxon>Tracheophyta</taxon>
        <taxon>Spermatophyta</taxon>
        <taxon>Magnoliopsida</taxon>
        <taxon>eudicotyledons</taxon>
        <taxon>Gunneridae</taxon>
        <taxon>Pentapetalae</taxon>
        <taxon>rosids</taxon>
        <taxon>fabids</taxon>
        <taxon>Rosales</taxon>
        <taxon>Rosaceae</taxon>
        <taxon>Amygdaloideae</taxon>
        <taxon>Maleae</taxon>
        <taxon>Malus</taxon>
    </lineage>
</organism>
<dbReference type="EC" id="2.4.1.-" evidence="3"/>
<dbReference type="EC" id="2.4.1.185" evidence="3"/>
<dbReference type="EMBL" id="AY786997">
    <property type="protein sequence ID" value="AAX16493.1"/>
    <property type="molecule type" value="mRNA"/>
</dbReference>
<dbReference type="RefSeq" id="NP_001315912.1">
    <property type="nucleotide sequence ID" value="NM_001328983.1"/>
</dbReference>
<dbReference type="SMR" id="A7MAS5"/>
<dbReference type="CAZy" id="GT1">
    <property type="family name" value="Glycosyltransferase Family 1"/>
</dbReference>
<dbReference type="GeneID" id="103443397"/>
<dbReference type="KEGG" id="mdm:103443397"/>
<dbReference type="OrthoDB" id="5835829at2759"/>
<dbReference type="GO" id="GO:0047243">
    <property type="term" value="F:flavanone 7-O-beta-glucosyltransferase activity"/>
    <property type="evidence" value="ECO:0007669"/>
    <property type="project" value="UniProtKB-EC"/>
</dbReference>
<dbReference type="GO" id="GO:0080043">
    <property type="term" value="F:quercetin 3-O-glucosyltransferase activity"/>
    <property type="evidence" value="ECO:0007669"/>
    <property type="project" value="TreeGrafter"/>
</dbReference>
<dbReference type="GO" id="GO:0080044">
    <property type="term" value="F:quercetin 7-O-glucosyltransferase activity"/>
    <property type="evidence" value="ECO:0007669"/>
    <property type="project" value="TreeGrafter"/>
</dbReference>
<dbReference type="GO" id="GO:0008194">
    <property type="term" value="F:UDP-glycosyltransferase activity"/>
    <property type="evidence" value="ECO:0000314"/>
    <property type="project" value="UniProtKB"/>
</dbReference>
<dbReference type="CDD" id="cd03784">
    <property type="entry name" value="GT1_Gtf-like"/>
    <property type="match status" value="1"/>
</dbReference>
<dbReference type="FunFam" id="3.40.50.2000:FF:000019">
    <property type="entry name" value="Glycosyltransferase"/>
    <property type="match status" value="1"/>
</dbReference>
<dbReference type="FunFam" id="3.40.50.2000:FF:000167">
    <property type="entry name" value="Glycosyltransferase"/>
    <property type="match status" value="1"/>
</dbReference>
<dbReference type="Gene3D" id="3.40.50.2000">
    <property type="entry name" value="Glycogen Phosphorylase B"/>
    <property type="match status" value="2"/>
</dbReference>
<dbReference type="InterPro" id="IPR002213">
    <property type="entry name" value="UDP_glucos_trans"/>
</dbReference>
<dbReference type="InterPro" id="IPR035595">
    <property type="entry name" value="UDP_glycos_trans_CS"/>
</dbReference>
<dbReference type="PANTHER" id="PTHR11926">
    <property type="entry name" value="GLUCOSYL/GLUCURONOSYL TRANSFERASES"/>
    <property type="match status" value="1"/>
</dbReference>
<dbReference type="PANTHER" id="PTHR11926:SF870">
    <property type="entry name" value="UDP-GLYCOSYLTRANSFERASE 75B1"/>
    <property type="match status" value="1"/>
</dbReference>
<dbReference type="Pfam" id="PF00201">
    <property type="entry name" value="UDPGT"/>
    <property type="match status" value="1"/>
</dbReference>
<dbReference type="SUPFAM" id="SSF53756">
    <property type="entry name" value="UDP-Glycosyltransferase/glycogen phosphorylase"/>
    <property type="match status" value="1"/>
</dbReference>
<dbReference type="PROSITE" id="PS00375">
    <property type="entry name" value="UDPGT"/>
    <property type="match status" value="1"/>
</dbReference>
<protein>
    <recommendedName>
        <fullName evidence="4">Phloretin 4'-O-glucosyltransferase</fullName>
        <shortName evidence="4">MdPh-4'-OGT</shortName>
        <ecNumber evidence="3">2.4.1.-</ecNumber>
    </recommendedName>
    <alternativeName>
        <fullName evidence="5">Flavanone 7-O-beta-glucosyltransferase UGT75L17</fullName>
        <ecNumber evidence="3">2.4.1.185</ecNumber>
    </alternativeName>
    <alternativeName>
        <fullName evidence="4">UDP-glycosyltransferase 75L17</fullName>
    </alternativeName>
</protein>
<comment type="function">
    <text evidence="3">Glycosyltransferase that possesses phloretin 4'-O-glycosyltransferase activity (PubMed:27316677). Converts phloretin to trilobatin (phloretin 4'-O-glucoside), a potential antioxidant (PubMed:27316677). Can convert with low efficiency phlorizin and trilobatin to their corresponding di-O-glucosides (PubMed:27316677). Can convert with low efficiency naringenin to naringenin-7-O-glucoside (PubMed:27316677). Can convert with low efficiency quercetin to quercetin-7-O-glucoside (PubMed:27316677).</text>
</comment>
<comment type="catalytic activity">
    <reaction evidence="3">
        <text>phloretin + UDP-alpha-D-glucose = trilobatin + UDP + H(+)</text>
        <dbReference type="Rhea" id="RHEA:65148"/>
        <dbReference type="ChEBI" id="CHEBI:15378"/>
        <dbReference type="ChEBI" id="CHEBI:17276"/>
        <dbReference type="ChEBI" id="CHEBI:58223"/>
        <dbReference type="ChEBI" id="CHEBI:58885"/>
        <dbReference type="ChEBI" id="CHEBI:145829"/>
    </reaction>
    <physiologicalReaction direction="left-to-right" evidence="3">
        <dbReference type="Rhea" id="RHEA:65149"/>
    </physiologicalReaction>
</comment>
<comment type="catalytic activity">
    <reaction evidence="3">
        <text>(2S)-naringenin + UDP-alpha-D-glucose = (2S)-naringenin 7-O-beta-D-glucoside + UDP + H(+)</text>
        <dbReference type="Rhea" id="RHEA:65152"/>
        <dbReference type="ChEBI" id="CHEBI:15378"/>
        <dbReference type="ChEBI" id="CHEBI:17846"/>
        <dbReference type="ChEBI" id="CHEBI:28327"/>
        <dbReference type="ChEBI" id="CHEBI:58223"/>
        <dbReference type="ChEBI" id="CHEBI:58885"/>
        <dbReference type="EC" id="2.4.1.185"/>
    </reaction>
    <physiologicalReaction direction="left-to-right" evidence="3">
        <dbReference type="Rhea" id="RHEA:65153"/>
    </physiologicalReaction>
</comment>
<comment type="biophysicochemical properties">
    <kinetics>
        <KM evidence="3">26.11 uM for phloretin</KM>
        <KM evidence="3">1.19 mM for UDP-alpha-D-glucose</KM>
        <Vmax evidence="3">1.86 pmol/sec/ug enzyme with phloretin as substrate</Vmax>
        <Vmax evidence="3">1.77 pmol/sec/ug enzyme with phloretin as substrate</Vmax>
    </kinetics>
    <phDependence>
        <text evidence="3">Optimum pH is 9.0.</text>
    </phDependence>
    <temperatureDependence>
        <text evidence="3">Optimum temperature is 40 degrees Celsius.</text>
    </temperatureDependence>
</comment>
<comment type="tissue specificity">
    <text evidence="3">Highly expressed in young leaves, at intermediate level in mature leaves and at low levels in flowers and fruits.</text>
</comment>
<comment type="similarity">
    <text evidence="5">Belongs to the UDP-glycosyltransferase family.</text>
</comment>
<keyword id="KW-0328">Glycosyltransferase</keyword>
<keyword id="KW-0808">Transferase</keyword>
<feature type="chain" id="PRO_0000451483" description="Phloretin 4'-O-glucosyltransferase">
    <location>
        <begin position="1"/>
        <end position="481"/>
    </location>
</feature>
<feature type="active site" description="Proton acceptor" evidence="1">
    <location>
        <position position="16"/>
    </location>
</feature>
<feature type="binding site" evidence="2">
    <location>
        <position position="16"/>
    </location>
    <ligand>
        <name>an anthocyanidin</name>
        <dbReference type="ChEBI" id="CHEBI:143576"/>
    </ligand>
</feature>
<feature type="binding site" evidence="1">
    <location>
        <position position="354"/>
    </location>
    <ligand>
        <name>UDP-alpha-D-glucose</name>
        <dbReference type="ChEBI" id="CHEBI:58885"/>
    </ligand>
</feature>
<feature type="binding site" evidence="1">
    <location>
        <position position="369"/>
    </location>
    <ligand>
        <name>UDP-alpha-D-glucose</name>
        <dbReference type="ChEBI" id="CHEBI:58885"/>
    </ligand>
</feature>
<feature type="binding site" evidence="1">
    <location>
        <position position="372"/>
    </location>
    <ligand>
        <name>UDP-alpha-D-glucose</name>
        <dbReference type="ChEBI" id="CHEBI:58885"/>
    </ligand>
</feature>
<feature type="binding site" evidence="1">
    <location>
        <position position="373"/>
    </location>
    <ligand>
        <name>UDP-alpha-D-glucose</name>
        <dbReference type="ChEBI" id="CHEBI:58885"/>
    </ligand>
</feature>
<feature type="binding site" evidence="1">
    <location>
        <position position="374"/>
    </location>
    <ligand>
        <name>UDP-alpha-D-glucose</name>
        <dbReference type="ChEBI" id="CHEBI:58885"/>
    </ligand>
</feature>
<feature type="binding site" evidence="1">
    <location>
        <position position="377"/>
    </location>
    <ligand>
        <name>UDP-alpha-D-glucose</name>
        <dbReference type="ChEBI" id="CHEBI:58885"/>
    </ligand>
</feature>
<feature type="binding site" evidence="1">
    <location>
        <position position="393"/>
    </location>
    <ligand>
        <name>UDP-alpha-D-glucose</name>
        <dbReference type="ChEBI" id="CHEBI:58885"/>
    </ligand>
</feature>
<feature type="binding site" evidence="1">
    <location>
        <position position="394"/>
    </location>
    <ligand>
        <name>UDP-alpha-D-glucose</name>
        <dbReference type="ChEBI" id="CHEBI:58885"/>
    </ligand>
</feature>
<name>75L17_MALDO</name>
<evidence type="ECO:0000250" key="1">
    <source>
        <dbReference type="UniProtKB" id="A0A0A1HA03"/>
    </source>
</evidence>
<evidence type="ECO:0000250" key="2">
    <source>
        <dbReference type="UniProtKB" id="P51094"/>
    </source>
</evidence>
<evidence type="ECO:0000269" key="3">
    <source>
    </source>
</evidence>
<evidence type="ECO:0000303" key="4">
    <source>
    </source>
</evidence>
<evidence type="ECO:0000305" key="5"/>